<comment type="function">
    <text evidence="1">Catalyzes the transfer of the enolpyruvyl moiety of phosphoenolpyruvate (PEP) to the 5-hydroxyl of shikimate-3-phosphate (S3P) to produce enolpyruvyl shikimate-3-phosphate and inorganic phosphate.</text>
</comment>
<comment type="catalytic activity">
    <reaction evidence="1">
        <text>3-phosphoshikimate + phosphoenolpyruvate = 5-O-(1-carboxyvinyl)-3-phosphoshikimate + phosphate</text>
        <dbReference type="Rhea" id="RHEA:21256"/>
        <dbReference type="ChEBI" id="CHEBI:43474"/>
        <dbReference type="ChEBI" id="CHEBI:57701"/>
        <dbReference type="ChEBI" id="CHEBI:58702"/>
        <dbReference type="ChEBI" id="CHEBI:145989"/>
        <dbReference type="EC" id="2.5.1.19"/>
    </reaction>
    <physiologicalReaction direction="left-to-right" evidence="1">
        <dbReference type="Rhea" id="RHEA:21257"/>
    </physiologicalReaction>
</comment>
<comment type="pathway">
    <text evidence="1">Metabolic intermediate biosynthesis; chorismate biosynthesis; chorismate from D-erythrose 4-phosphate and phosphoenolpyruvate: step 6/7.</text>
</comment>
<comment type="subunit">
    <text evidence="1">Monomer.</text>
</comment>
<comment type="subcellular location">
    <subcellularLocation>
        <location evidence="1">Cytoplasm</location>
    </subcellularLocation>
</comment>
<comment type="similarity">
    <text evidence="1">Belongs to the EPSP synthase family.</text>
</comment>
<dbReference type="EC" id="2.5.1.19" evidence="1"/>
<dbReference type="EMBL" id="AM933172">
    <property type="protein sequence ID" value="CAR32465.1"/>
    <property type="molecule type" value="Genomic_DNA"/>
</dbReference>
<dbReference type="RefSeq" id="WP_000445198.1">
    <property type="nucleotide sequence ID" value="NC_011294.1"/>
</dbReference>
<dbReference type="SMR" id="B5QYQ8"/>
<dbReference type="KEGG" id="set:SEN0882"/>
<dbReference type="HOGENOM" id="CLU_024321_0_0_6"/>
<dbReference type="UniPathway" id="UPA00053">
    <property type="reaction ID" value="UER00089"/>
</dbReference>
<dbReference type="Proteomes" id="UP000000613">
    <property type="component" value="Chromosome"/>
</dbReference>
<dbReference type="GO" id="GO:0005737">
    <property type="term" value="C:cytoplasm"/>
    <property type="evidence" value="ECO:0007669"/>
    <property type="project" value="UniProtKB-SubCell"/>
</dbReference>
<dbReference type="GO" id="GO:0003866">
    <property type="term" value="F:3-phosphoshikimate 1-carboxyvinyltransferase activity"/>
    <property type="evidence" value="ECO:0007669"/>
    <property type="project" value="UniProtKB-UniRule"/>
</dbReference>
<dbReference type="GO" id="GO:0008652">
    <property type="term" value="P:amino acid biosynthetic process"/>
    <property type="evidence" value="ECO:0007669"/>
    <property type="project" value="UniProtKB-KW"/>
</dbReference>
<dbReference type="GO" id="GO:0009073">
    <property type="term" value="P:aromatic amino acid family biosynthetic process"/>
    <property type="evidence" value="ECO:0007669"/>
    <property type="project" value="UniProtKB-KW"/>
</dbReference>
<dbReference type="GO" id="GO:0009423">
    <property type="term" value="P:chorismate biosynthetic process"/>
    <property type="evidence" value="ECO:0007669"/>
    <property type="project" value="UniProtKB-UniRule"/>
</dbReference>
<dbReference type="FunFam" id="3.65.10.10:FF:000003">
    <property type="entry name" value="3-phosphoshikimate 1-carboxyvinyltransferase"/>
    <property type="match status" value="1"/>
</dbReference>
<dbReference type="FunFam" id="3.65.10.10:FF:000004">
    <property type="entry name" value="3-phosphoshikimate 1-carboxyvinyltransferase"/>
    <property type="match status" value="1"/>
</dbReference>
<dbReference type="Gene3D" id="3.65.10.10">
    <property type="entry name" value="Enolpyruvate transferase domain"/>
    <property type="match status" value="2"/>
</dbReference>
<dbReference type="HAMAP" id="MF_00210">
    <property type="entry name" value="EPSP_synth"/>
    <property type="match status" value="1"/>
</dbReference>
<dbReference type="InterPro" id="IPR001986">
    <property type="entry name" value="Enolpyruvate_Tfrase_dom"/>
</dbReference>
<dbReference type="InterPro" id="IPR036968">
    <property type="entry name" value="Enolpyruvate_Tfrase_sf"/>
</dbReference>
<dbReference type="InterPro" id="IPR006264">
    <property type="entry name" value="EPSP_synthase"/>
</dbReference>
<dbReference type="InterPro" id="IPR023193">
    <property type="entry name" value="EPSP_synthase_CS"/>
</dbReference>
<dbReference type="InterPro" id="IPR013792">
    <property type="entry name" value="RNA3'P_cycl/enolpyr_Trfase_a/b"/>
</dbReference>
<dbReference type="NCBIfam" id="TIGR01356">
    <property type="entry name" value="aroA"/>
    <property type="match status" value="1"/>
</dbReference>
<dbReference type="PANTHER" id="PTHR21090">
    <property type="entry name" value="AROM/DEHYDROQUINATE SYNTHASE"/>
    <property type="match status" value="1"/>
</dbReference>
<dbReference type="PANTHER" id="PTHR21090:SF5">
    <property type="entry name" value="PENTAFUNCTIONAL AROM POLYPEPTIDE"/>
    <property type="match status" value="1"/>
</dbReference>
<dbReference type="Pfam" id="PF00275">
    <property type="entry name" value="EPSP_synthase"/>
    <property type="match status" value="1"/>
</dbReference>
<dbReference type="PIRSF" id="PIRSF000505">
    <property type="entry name" value="EPSPS"/>
    <property type="match status" value="1"/>
</dbReference>
<dbReference type="SUPFAM" id="SSF55205">
    <property type="entry name" value="EPT/RTPC-like"/>
    <property type="match status" value="1"/>
</dbReference>
<dbReference type="PROSITE" id="PS00104">
    <property type="entry name" value="EPSP_SYNTHASE_1"/>
    <property type="match status" value="1"/>
</dbReference>
<dbReference type="PROSITE" id="PS00885">
    <property type="entry name" value="EPSP_SYNTHASE_2"/>
    <property type="match status" value="1"/>
</dbReference>
<keyword id="KW-0028">Amino-acid biosynthesis</keyword>
<keyword id="KW-0057">Aromatic amino acid biosynthesis</keyword>
<keyword id="KW-0963">Cytoplasm</keyword>
<keyword id="KW-0808">Transferase</keyword>
<gene>
    <name evidence="1" type="primary">aroA</name>
    <name type="ordered locus">SEN0882</name>
</gene>
<name>AROA_SALEP</name>
<feature type="chain" id="PRO_1000099746" description="3-phosphoshikimate 1-carboxyvinyltransferase">
    <location>
        <begin position="1"/>
        <end position="427"/>
    </location>
</feature>
<feature type="active site" description="Proton acceptor" evidence="1">
    <location>
        <position position="313"/>
    </location>
</feature>
<feature type="binding site" evidence="1">
    <location>
        <position position="22"/>
    </location>
    <ligand>
        <name>3-phosphoshikimate</name>
        <dbReference type="ChEBI" id="CHEBI:145989"/>
    </ligand>
</feature>
<feature type="binding site" evidence="1">
    <location>
        <position position="22"/>
    </location>
    <ligand>
        <name>phosphoenolpyruvate</name>
        <dbReference type="ChEBI" id="CHEBI:58702"/>
    </ligand>
</feature>
<feature type="binding site" evidence="1">
    <location>
        <position position="23"/>
    </location>
    <ligand>
        <name>3-phosphoshikimate</name>
        <dbReference type="ChEBI" id="CHEBI:145989"/>
    </ligand>
</feature>
<feature type="binding site" evidence="1">
    <location>
        <position position="27"/>
    </location>
    <ligand>
        <name>3-phosphoshikimate</name>
        <dbReference type="ChEBI" id="CHEBI:145989"/>
    </ligand>
</feature>
<feature type="binding site" evidence="1">
    <location>
        <position position="96"/>
    </location>
    <ligand>
        <name>phosphoenolpyruvate</name>
        <dbReference type="ChEBI" id="CHEBI:58702"/>
    </ligand>
</feature>
<feature type="binding site" evidence="1">
    <location>
        <position position="124"/>
    </location>
    <ligand>
        <name>phosphoenolpyruvate</name>
        <dbReference type="ChEBI" id="CHEBI:58702"/>
    </ligand>
</feature>
<feature type="binding site" evidence="1">
    <location>
        <position position="169"/>
    </location>
    <ligand>
        <name>3-phosphoshikimate</name>
        <dbReference type="ChEBI" id="CHEBI:145989"/>
    </ligand>
</feature>
<feature type="binding site" evidence="1">
    <location>
        <position position="170"/>
    </location>
    <ligand>
        <name>3-phosphoshikimate</name>
        <dbReference type="ChEBI" id="CHEBI:145989"/>
    </ligand>
</feature>
<feature type="binding site" evidence="1">
    <location>
        <position position="171"/>
    </location>
    <ligand>
        <name>3-phosphoshikimate</name>
        <dbReference type="ChEBI" id="CHEBI:145989"/>
    </ligand>
</feature>
<feature type="binding site" evidence="1">
    <location>
        <position position="171"/>
    </location>
    <ligand>
        <name>phosphoenolpyruvate</name>
        <dbReference type="ChEBI" id="CHEBI:58702"/>
    </ligand>
</feature>
<feature type="binding site" evidence="1">
    <location>
        <position position="197"/>
    </location>
    <ligand>
        <name>3-phosphoshikimate</name>
        <dbReference type="ChEBI" id="CHEBI:145989"/>
    </ligand>
</feature>
<feature type="binding site" evidence="1">
    <location>
        <position position="313"/>
    </location>
    <ligand>
        <name>3-phosphoshikimate</name>
        <dbReference type="ChEBI" id="CHEBI:145989"/>
    </ligand>
</feature>
<feature type="binding site" evidence="1">
    <location>
        <position position="336"/>
    </location>
    <ligand>
        <name>3-phosphoshikimate</name>
        <dbReference type="ChEBI" id="CHEBI:145989"/>
    </ligand>
</feature>
<feature type="binding site" evidence="1">
    <location>
        <position position="340"/>
    </location>
    <ligand>
        <name>3-phosphoshikimate</name>
        <dbReference type="ChEBI" id="CHEBI:145989"/>
    </ligand>
</feature>
<feature type="binding site" evidence="1">
    <location>
        <position position="344"/>
    </location>
    <ligand>
        <name>phosphoenolpyruvate</name>
        <dbReference type="ChEBI" id="CHEBI:58702"/>
    </ligand>
</feature>
<feature type="binding site" evidence="1">
    <location>
        <position position="386"/>
    </location>
    <ligand>
        <name>phosphoenolpyruvate</name>
        <dbReference type="ChEBI" id="CHEBI:58702"/>
    </ligand>
</feature>
<feature type="binding site" evidence="1">
    <location>
        <position position="411"/>
    </location>
    <ligand>
        <name>phosphoenolpyruvate</name>
        <dbReference type="ChEBI" id="CHEBI:58702"/>
    </ligand>
</feature>
<organism>
    <name type="scientific">Salmonella enteritidis PT4 (strain P125109)</name>
    <dbReference type="NCBI Taxonomy" id="550537"/>
    <lineage>
        <taxon>Bacteria</taxon>
        <taxon>Pseudomonadati</taxon>
        <taxon>Pseudomonadota</taxon>
        <taxon>Gammaproteobacteria</taxon>
        <taxon>Enterobacterales</taxon>
        <taxon>Enterobacteriaceae</taxon>
        <taxon>Salmonella</taxon>
    </lineage>
</organism>
<evidence type="ECO:0000255" key="1">
    <source>
        <dbReference type="HAMAP-Rule" id="MF_00210"/>
    </source>
</evidence>
<reference key="1">
    <citation type="journal article" date="2008" name="Genome Res.">
        <title>Comparative genome analysis of Salmonella enteritidis PT4 and Salmonella gallinarum 287/91 provides insights into evolutionary and host adaptation pathways.</title>
        <authorList>
            <person name="Thomson N.R."/>
            <person name="Clayton D.J."/>
            <person name="Windhorst D."/>
            <person name="Vernikos G."/>
            <person name="Davidson S."/>
            <person name="Churcher C."/>
            <person name="Quail M.A."/>
            <person name="Stevens M."/>
            <person name="Jones M.A."/>
            <person name="Watson M."/>
            <person name="Barron A."/>
            <person name="Layton A."/>
            <person name="Pickard D."/>
            <person name="Kingsley R.A."/>
            <person name="Bignell A."/>
            <person name="Clark L."/>
            <person name="Harris B."/>
            <person name="Ormond D."/>
            <person name="Abdellah Z."/>
            <person name="Brooks K."/>
            <person name="Cherevach I."/>
            <person name="Chillingworth T."/>
            <person name="Woodward J."/>
            <person name="Norberczak H."/>
            <person name="Lord A."/>
            <person name="Arrowsmith C."/>
            <person name="Jagels K."/>
            <person name="Moule S."/>
            <person name="Mungall K."/>
            <person name="Saunders M."/>
            <person name="Whitehead S."/>
            <person name="Chabalgoity J.A."/>
            <person name="Maskell D."/>
            <person name="Humphreys T."/>
            <person name="Roberts M."/>
            <person name="Barrow P.A."/>
            <person name="Dougan G."/>
            <person name="Parkhill J."/>
        </authorList>
    </citation>
    <scope>NUCLEOTIDE SEQUENCE [LARGE SCALE GENOMIC DNA]</scope>
    <source>
        <strain>P125109</strain>
    </source>
</reference>
<sequence>MESLTLQPIARVDGAINLPGSKSVSNRALLLAALACGKTVLTNLLDSDDVRHMLNALSALGINYTLSADRTRCDITGNGGPLRAPGALELFLGNAGTAMRPLAAALCLGQNEIVLTGEPRMKERPIGHLVDSLRQGGANIDYLEQENYPPLRLRGGFIGGDIEVDGSVSSQFLTALLMTAPLAPKDTIIRVKGELVSKPYIDITLNLMKTFGVEIANHHYQQFVVKGGQQYHSPGRYLVEGDASSASYFLAAGAIKGGTVKVTGIGRKSMQGDIRFADVLEKMGATITWGDDFIACTRGELHAIDMDMNHIPDAAMTIATTALFAKGTTTLRNIYNWRVKETDRLFAMATELRKVGAEVEEGHDYIRITPPAKLQHADIGTYNDHRMAMCFSLVALSDTPVTILDPKCTAKTFPDYFEQLARMSTPA</sequence>
<protein>
    <recommendedName>
        <fullName evidence="1">3-phosphoshikimate 1-carboxyvinyltransferase</fullName>
        <ecNumber evidence="1">2.5.1.19</ecNumber>
    </recommendedName>
    <alternativeName>
        <fullName evidence="1">5-enolpyruvylshikimate-3-phosphate synthase</fullName>
        <shortName evidence="1">EPSP synthase</shortName>
        <shortName evidence="1">EPSPS</shortName>
    </alternativeName>
</protein>
<accession>B5QYQ8</accession>
<proteinExistence type="inferred from homology"/>